<feature type="chain" id="PRO_0000371257" description="Uncharacterized J domain-containing protein PF3D7_1401100">
    <location>
        <begin position="1"/>
        <end position="492"/>
    </location>
</feature>
<feature type="transmembrane region" description="Helical" evidence="1">
    <location>
        <begin position="30"/>
        <end position="46"/>
    </location>
</feature>
<feature type="domain" description="J" evidence="2">
    <location>
        <begin position="144"/>
        <end position="210"/>
    </location>
</feature>
<protein>
    <recommendedName>
        <fullName>Uncharacterized J domain-containing protein PF3D7_1401100</fullName>
    </recommendedName>
</protein>
<name>YPFJ1_PLAF7</name>
<organism>
    <name type="scientific">Plasmodium falciparum (isolate 3D7)</name>
    <dbReference type="NCBI Taxonomy" id="36329"/>
    <lineage>
        <taxon>Eukaryota</taxon>
        <taxon>Sar</taxon>
        <taxon>Alveolata</taxon>
        <taxon>Apicomplexa</taxon>
        <taxon>Aconoidasida</taxon>
        <taxon>Haemosporida</taxon>
        <taxon>Plasmodiidae</taxon>
        <taxon>Plasmodium</taxon>
        <taxon>Plasmodium (Laverania)</taxon>
    </lineage>
</organism>
<accession>Q8IM77</accession>
<accession>A0A144A181</accession>
<keyword id="KW-0472">Membrane</keyword>
<keyword id="KW-0477">Merozoite</keyword>
<keyword id="KW-1185">Reference proteome</keyword>
<keyword id="KW-0812">Transmembrane</keyword>
<keyword id="KW-1133">Transmembrane helix</keyword>
<sequence>MSNRQSIDDMNLSVKNKKSKSIFSCRPVKYVCLSVAVAAVGYANYMNNGDRNSLSCVDLNNVYSRNLSESQENHNSSFTRTNLVENENEEDDIFGVHRDESFAETVLNGQDIISYLEHQNTKIHEDNIHDDISHTLLNEGDVQNYYDVLNVNEHSDLNELKRNFHNLSLQHYPKITSDNSFELNDEFNQLSEAYQVLSYQIRKNIYDNEGVYGTKKMAIVNPLIYFNGIFTTQLMHEYIGTTEVAQFVQLFLERNIAPENIVSFLEESVSDMMKGQDYRELQLTELLKQKLDLYINDDEKWQNIIKSEINVLTKSPFSKFILEAVGWTYENVGNIYMEQTDNFDNVYHGIYVNLADERINRNYAILDENVNDFVSLLKKFYPFTETVNPYLRRAKHNLNNLQGGINNLYSSVNVVYDNLFNENINISSNEHYHLLQELLKIILNINLCDIEETIRECAYNVLKDKTVDASVHSKRAHRMNILGSLMLESSNE</sequence>
<evidence type="ECO:0000255" key="1"/>
<evidence type="ECO:0000255" key="2">
    <source>
        <dbReference type="PROSITE-ProRule" id="PRU00286"/>
    </source>
</evidence>
<evidence type="ECO:0000269" key="3">
    <source>
    </source>
</evidence>
<evidence type="ECO:0000305" key="4"/>
<gene>
    <name type="ORF">PF14_0013</name>
    <name type="ORF">PF3D7_1401100</name>
</gene>
<dbReference type="EMBL" id="LN999946">
    <property type="protein sequence ID" value="CZT99717.1"/>
    <property type="molecule type" value="Genomic_DNA"/>
</dbReference>
<dbReference type="RefSeq" id="XP_001348186.2">
    <property type="nucleotide sequence ID" value="XM_001348150.2"/>
</dbReference>
<dbReference type="BioGRID" id="1206968">
    <property type="interactions" value="2"/>
</dbReference>
<dbReference type="IntAct" id="Q8IM77">
    <property type="interactions" value="1"/>
</dbReference>
<dbReference type="STRING" id="36329.Q8IM77"/>
<dbReference type="PaxDb" id="5833-PF14_0013"/>
<dbReference type="EnsemblProtists" id="CZT99717">
    <property type="protein sequence ID" value="CZT99717"/>
    <property type="gene ID" value="PF3D7_1401100"/>
</dbReference>
<dbReference type="GeneID" id="811599"/>
<dbReference type="KEGG" id="pfa:PF3D7_1401100"/>
<dbReference type="VEuPathDB" id="PlasmoDB:PF3D7_1401100"/>
<dbReference type="HOGENOM" id="CLU_583291_0_0_1"/>
<dbReference type="InParanoid" id="Q8IM77"/>
<dbReference type="OMA" id="HEYIGTT"/>
<dbReference type="OrthoDB" id="10250354at2759"/>
<dbReference type="PhylomeDB" id="Q8IM77"/>
<dbReference type="Proteomes" id="UP000001450">
    <property type="component" value="Chromosome 14"/>
</dbReference>
<dbReference type="GO" id="GO:0016020">
    <property type="term" value="C:membrane"/>
    <property type="evidence" value="ECO:0007669"/>
    <property type="project" value="UniProtKB-SubCell"/>
</dbReference>
<dbReference type="CDD" id="cd06257">
    <property type="entry name" value="DnaJ"/>
    <property type="match status" value="1"/>
</dbReference>
<dbReference type="Gene3D" id="1.10.287.110">
    <property type="entry name" value="DnaJ domain"/>
    <property type="match status" value="1"/>
</dbReference>
<dbReference type="InterPro" id="IPR001623">
    <property type="entry name" value="DnaJ_domain"/>
</dbReference>
<dbReference type="InterPro" id="IPR026894">
    <property type="entry name" value="DnaJ_X"/>
</dbReference>
<dbReference type="InterPro" id="IPR052423">
    <property type="entry name" value="EMIR"/>
</dbReference>
<dbReference type="InterPro" id="IPR036869">
    <property type="entry name" value="J_dom_sf"/>
</dbReference>
<dbReference type="PANTHER" id="PTHR44094">
    <property type="entry name" value="DNAJ HEAT SHOCK N-TERMINAL DOMAIN-CONTAINING PROTEIN"/>
    <property type="match status" value="1"/>
</dbReference>
<dbReference type="PANTHER" id="PTHR44094:SF8">
    <property type="entry name" value="DNAJ HEAT SHOCK N-TERMINAL DOMAIN-CONTAINING PROTEIN-RELATED"/>
    <property type="match status" value="1"/>
</dbReference>
<dbReference type="Pfam" id="PF00226">
    <property type="entry name" value="DnaJ"/>
    <property type="match status" value="1"/>
</dbReference>
<dbReference type="Pfam" id="PF14308">
    <property type="entry name" value="DnaJ-X"/>
    <property type="match status" value="1"/>
</dbReference>
<dbReference type="PRINTS" id="PR00625">
    <property type="entry name" value="JDOMAIN"/>
</dbReference>
<dbReference type="SMART" id="SM00271">
    <property type="entry name" value="DnaJ"/>
    <property type="match status" value="1"/>
</dbReference>
<dbReference type="SUPFAM" id="SSF46565">
    <property type="entry name" value="Chaperone J-domain"/>
    <property type="match status" value="1"/>
</dbReference>
<dbReference type="PROSITE" id="PS50076">
    <property type="entry name" value="DNAJ_2"/>
    <property type="match status" value="1"/>
</dbReference>
<comment type="subcellular location">
    <subcellularLocation>
        <location evidence="1">Membrane</location>
        <topology evidence="1">Single-pass membrane protein</topology>
    </subcellularLocation>
</comment>
<comment type="biotechnology">
    <text evidence="3">Possible candidate for an effective malaria vaccine as determined by epitope response in sera.</text>
</comment>
<reference key="1">
    <citation type="journal article" date="2002" name="Nature">
        <title>Genome sequence of the human malaria parasite Plasmodium falciparum.</title>
        <authorList>
            <person name="Gardner M.J."/>
            <person name="Hall N."/>
            <person name="Fung E."/>
            <person name="White O."/>
            <person name="Berriman M."/>
            <person name="Hyman R.W."/>
            <person name="Carlton J.M."/>
            <person name="Pain A."/>
            <person name="Nelson K.E."/>
            <person name="Bowman S."/>
            <person name="Paulsen I.T."/>
            <person name="James K.D."/>
            <person name="Eisen J.A."/>
            <person name="Rutherford K.M."/>
            <person name="Salzberg S.L."/>
            <person name="Craig A."/>
            <person name="Kyes S."/>
            <person name="Chan M.-S."/>
            <person name="Nene V."/>
            <person name="Shallom S.J."/>
            <person name="Suh B."/>
            <person name="Peterson J."/>
            <person name="Angiuoli S."/>
            <person name="Pertea M."/>
            <person name="Allen J."/>
            <person name="Selengut J."/>
            <person name="Haft D."/>
            <person name="Mather M.W."/>
            <person name="Vaidya A.B."/>
            <person name="Martin D.M.A."/>
            <person name="Fairlamb A.H."/>
            <person name="Fraunholz M.J."/>
            <person name="Roos D.S."/>
            <person name="Ralph S.A."/>
            <person name="McFadden G.I."/>
            <person name="Cummings L.M."/>
            <person name="Subramanian G.M."/>
            <person name="Mungall C."/>
            <person name="Venter J.C."/>
            <person name="Carucci D.J."/>
            <person name="Hoffman S.L."/>
            <person name="Newbold C."/>
            <person name="Davis R.W."/>
            <person name="Fraser C.M."/>
            <person name="Barrell B.G."/>
        </authorList>
    </citation>
    <scope>NUCLEOTIDE SEQUENCE [LARGE SCALE GENOMIC DNA]</scope>
    <source>
        <strain>3D7</strain>
    </source>
</reference>
<reference evidence="4" key="2">
    <citation type="journal article" date="2007" name="PLoS ONE">
        <title>Rapid identification of malaria vaccine candidates based on alpha-helical coiled coil protein motif.</title>
        <authorList>
            <person name="Villard V."/>
            <person name="Agak G.W."/>
            <person name="Frank G."/>
            <person name="Jafarshad A."/>
            <person name="Servis C."/>
            <person name="Nebie I."/>
            <person name="Sirima S.B."/>
            <person name="Felger I."/>
            <person name="Arevalo-Herrera M."/>
            <person name="Herrera S."/>
            <person name="Heitz F."/>
            <person name="Baecker V."/>
            <person name="Druilhe P."/>
            <person name="Kajava A.V."/>
            <person name="Corradin G."/>
        </authorList>
    </citation>
    <scope>SYNTHESIS OF 389-421</scope>
    <scope>POSSIBLE CANDIDATE MALARIA EPITOPE</scope>
</reference>
<proteinExistence type="evidence at protein level"/>